<accession>Q8FTE6</accession>
<sequence length="489" mass="55039">MSAEVTHTGQHPETGALTRRIMGVETEYGITCMDGEVRRLRPDEIAKYLFRPVVDKYSSSNIFIPNASRLYLDVGSHPEYATAECDSLTQLINAEKAGDVIVNRMAVEAEAALAREGIGGQVYLFKNNVDSIGNSYGCHENYLVRREVSLKALGRRLMPFLITRQLISGAGMIQHPNPMSKGEGFPLGYCISQRADHVWEGVSSATTRSRPIINTRDEPHADSHRYRRLHVIVGDANMAEPTIALKVGSTLLVLEMIEADFGLPDMELSNDIESIREIARDQTGRIPLKLKDGTTRSALEIQQVVFDHARRWLDHRVESRGTSNEEMARVLDLWGRMLSAIETQDFSQVDQEIDWVIKKKLLDRYQTRGNLGLDDPRLAQIDLTYHDIRPGRGLFSVLQNRGMITRWTTDEAINHAVDHAPETTRAHLRGRILKAADKLGAPVTVDWMRHKVNRPDPQLVELSDPFSPVDAEVDALIAYMEAHAETYRT</sequence>
<gene>
    <name evidence="1" type="primary">pafA</name>
    <name type="ordered locus">CE1623</name>
</gene>
<proteinExistence type="inferred from homology"/>
<evidence type="ECO:0000255" key="1">
    <source>
        <dbReference type="HAMAP-Rule" id="MF_02111"/>
    </source>
</evidence>
<dbReference type="EC" id="6.3.1.19" evidence="1"/>
<dbReference type="EMBL" id="BA000035">
    <property type="protein sequence ID" value="BAC18433.1"/>
    <property type="molecule type" value="Genomic_DNA"/>
</dbReference>
<dbReference type="RefSeq" id="WP_006767623.1">
    <property type="nucleotide sequence ID" value="NC_004369.1"/>
</dbReference>
<dbReference type="SMR" id="Q8FTE6"/>
<dbReference type="STRING" id="196164.gene:10742042"/>
<dbReference type="KEGG" id="cef:CE1623"/>
<dbReference type="eggNOG" id="COG0638">
    <property type="taxonomic scope" value="Bacteria"/>
</dbReference>
<dbReference type="HOGENOM" id="CLU_040524_0_1_11"/>
<dbReference type="UniPathway" id="UPA00997"/>
<dbReference type="UniPathway" id="UPA00998"/>
<dbReference type="Proteomes" id="UP000001409">
    <property type="component" value="Chromosome"/>
</dbReference>
<dbReference type="GO" id="GO:0005524">
    <property type="term" value="F:ATP binding"/>
    <property type="evidence" value="ECO:0007669"/>
    <property type="project" value="UniProtKB-UniRule"/>
</dbReference>
<dbReference type="GO" id="GO:0016879">
    <property type="term" value="F:ligase activity, forming carbon-nitrogen bonds"/>
    <property type="evidence" value="ECO:0007669"/>
    <property type="project" value="InterPro"/>
</dbReference>
<dbReference type="GO" id="GO:0000287">
    <property type="term" value="F:magnesium ion binding"/>
    <property type="evidence" value="ECO:0007669"/>
    <property type="project" value="UniProtKB-UniRule"/>
</dbReference>
<dbReference type="GO" id="GO:0019787">
    <property type="term" value="F:ubiquitin-like protein transferase activity"/>
    <property type="evidence" value="ECO:0007669"/>
    <property type="project" value="UniProtKB-UniRule"/>
</dbReference>
<dbReference type="GO" id="GO:0019941">
    <property type="term" value="P:modification-dependent protein catabolic process"/>
    <property type="evidence" value="ECO:0007669"/>
    <property type="project" value="UniProtKB-UniRule"/>
</dbReference>
<dbReference type="GO" id="GO:0010498">
    <property type="term" value="P:proteasomal protein catabolic process"/>
    <property type="evidence" value="ECO:0007669"/>
    <property type="project" value="UniProtKB-UniRule"/>
</dbReference>
<dbReference type="GO" id="GO:0070490">
    <property type="term" value="P:protein pupylation"/>
    <property type="evidence" value="ECO:0007669"/>
    <property type="project" value="UniProtKB-UniRule"/>
</dbReference>
<dbReference type="HAMAP" id="MF_02111">
    <property type="entry name" value="Pup_ligase"/>
    <property type="match status" value="1"/>
</dbReference>
<dbReference type="InterPro" id="IPR022279">
    <property type="entry name" value="Pup_ligase"/>
</dbReference>
<dbReference type="InterPro" id="IPR004347">
    <property type="entry name" value="Pup_ligase/deamidase"/>
</dbReference>
<dbReference type="NCBIfam" id="TIGR03686">
    <property type="entry name" value="pupylate_PafA"/>
    <property type="match status" value="1"/>
</dbReference>
<dbReference type="PANTHER" id="PTHR42307">
    <property type="entry name" value="PUP DEAMIDASE/DEPUPYLASE"/>
    <property type="match status" value="1"/>
</dbReference>
<dbReference type="PANTHER" id="PTHR42307:SF3">
    <property type="entry name" value="PUP--PROTEIN LIGASE"/>
    <property type="match status" value="1"/>
</dbReference>
<dbReference type="Pfam" id="PF03136">
    <property type="entry name" value="Pup_ligase"/>
    <property type="match status" value="1"/>
</dbReference>
<dbReference type="PIRSF" id="PIRSF018077">
    <property type="entry name" value="UCP018077"/>
    <property type="match status" value="1"/>
</dbReference>
<comment type="function">
    <text evidence="1">Catalyzes the covalent attachment of the prokaryotic ubiquitin-like protein modifier Pup to the proteasomal substrate proteins, thereby targeting them for proteasomal degradation. This tagging system is termed pupylation. The ligation reaction involves the side-chain carboxylate of the C-terminal glutamate of Pup and the side-chain amino group of a substrate lysine.</text>
</comment>
<comment type="catalytic activity">
    <reaction evidence="1">
        <text>ATP + [prokaryotic ubiquitin-like protein]-L-glutamate + [protein]-L-lysine = ADP + phosphate + N(6)-([prokaryotic ubiquitin-like protein]-gamma-L-glutamyl)-[protein]-L-lysine.</text>
        <dbReference type="EC" id="6.3.1.19"/>
    </reaction>
</comment>
<comment type="pathway">
    <text evidence="1">Protein degradation; proteasomal Pup-dependent pathway.</text>
</comment>
<comment type="pathway">
    <text evidence="1">Protein modification; protein pupylation.</text>
</comment>
<comment type="miscellaneous">
    <text evidence="1">The reaction mechanism probably proceeds via the activation of Pup by phosphorylation of its C-terminal glutamate, which is then subject to nucleophilic attack by the substrate lysine, resulting in an isopeptide bond and the release of phosphate as a good leaving group.</text>
</comment>
<comment type="similarity">
    <text evidence="1">Belongs to the Pup ligase/Pup deamidase family. Pup-conjugating enzyme subfamily.</text>
</comment>
<reference key="1">
    <citation type="journal article" date="2003" name="Genome Res.">
        <title>Comparative complete genome sequence analysis of the amino acid replacements responsible for the thermostability of Corynebacterium efficiens.</title>
        <authorList>
            <person name="Nishio Y."/>
            <person name="Nakamura Y."/>
            <person name="Kawarabayasi Y."/>
            <person name="Usuda Y."/>
            <person name="Kimura E."/>
            <person name="Sugimoto S."/>
            <person name="Matsui K."/>
            <person name="Yamagishi A."/>
            <person name="Kikuchi H."/>
            <person name="Ikeo K."/>
            <person name="Gojobori T."/>
        </authorList>
    </citation>
    <scope>NUCLEOTIDE SEQUENCE [LARGE SCALE GENOMIC DNA]</scope>
    <source>
        <strain>DSM 44549 / YS-314 / AJ 12310 / JCM 11189 / NBRC 100395</strain>
    </source>
</reference>
<protein>
    <recommendedName>
        <fullName evidence="1">Pup--protein ligase</fullName>
        <ecNumber evidence="1">6.3.1.19</ecNumber>
    </recommendedName>
    <alternativeName>
        <fullName evidence="1">Proteasome accessory factor A</fullName>
    </alternativeName>
    <alternativeName>
        <fullName evidence="1">Pup-conjugating enzyme</fullName>
    </alternativeName>
</protein>
<keyword id="KW-0067">ATP-binding</keyword>
<keyword id="KW-0436">Ligase</keyword>
<keyword id="KW-0460">Magnesium</keyword>
<keyword id="KW-0479">Metal-binding</keyword>
<keyword id="KW-0547">Nucleotide-binding</keyword>
<keyword id="KW-1185">Reference proteome</keyword>
<keyword id="KW-0833">Ubl conjugation pathway</keyword>
<organism>
    <name type="scientific">Corynebacterium efficiens (strain DSM 44549 / YS-314 / AJ 12310 / JCM 11189 / NBRC 100395)</name>
    <dbReference type="NCBI Taxonomy" id="196164"/>
    <lineage>
        <taxon>Bacteria</taxon>
        <taxon>Bacillati</taxon>
        <taxon>Actinomycetota</taxon>
        <taxon>Actinomycetes</taxon>
        <taxon>Mycobacteriales</taxon>
        <taxon>Corynebacteriaceae</taxon>
        <taxon>Corynebacterium</taxon>
    </lineage>
</organism>
<name>PAFA_COREF</name>
<feature type="chain" id="PRO_0000395907" description="Pup--protein ligase">
    <location>
        <begin position="1"/>
        <end position="489"/>
    </location>
</feature>
<feature type="active site" description="Proton acceptor" evidence="1">
    <location>
        <position position="73"/>
    </location>
</feature>
<feature type="binding site" evidence="1">
    <location>
        <position position="25"/>
    </location>
    <ligand>
        <name>Mg(2+)</name>
        <dbReference type="ChEBI" id="CHEBI:18420"/>
    </ligand>
</feature>
<feature type="binding site" evidence="1">
    <location>
        <position position="69"/>
    </location>
    <ligand>
        <name>ATP</name>
        <dbReference type="ChEBI" id="CHEBI:30616"/>
    </ligand>
</feature>
<feature type="binding site" evidence="1">
    <location>
        <position position="71"/>
    </location>
    <ligand>
        <name>Mg(2+)</name>
        <dbReference type="ChEBI" id="CHEBI:18420"/>
    </ligand>
</feature>
<feature type="binding site" evidence="1">
    <location>
        <position position="79"/>
    </location>
    <ligand>
        <name>Mg(2+)</name>
        <dbReference type="ChEBI" id="CHEBI:18420"/>
    </ligand>
</feature>
<feature type="binding site" evidence="1">
    <location>
        <position position="82"/>
    </location>
    <ligand>
        <name>ATP</name>
        <dbReference type="ChEBI" id="CHEBI:30616"/>
    </ligand>
</feature>
<feature type="binding site" evidence="1">
    <location>
        <position position="447"/>
    </location>
    <ligand>
        <name>ATP</name>
        <dbReference type="ChEBI" id="CHEBI:30616"/>
    </ligand>
</feature>